<sequence>MSTPDNRSVNFFSLFRRGQHYSKTWPLEKRLAPVFVENRVIKMTRYAIRFMPPIAVFTLCWQIALGGQLGPAVATALFALSLPMQGLWWLGKRSVTPLPPAILNWFYEVRGKLQESGQVLAPVEGKPDYQALADTLKRAFKQLDKTFLDDL</sequence>
<reference key="1">
    <citation type="journal article" date="1997" name="DNA Res.">
        <title>Construction of a contiguous 874-kb sequence of the Escherichia coli-K12 genome corresponding to 50.0-68.8 min on the linkage map and analysis of its sequence features.</title>
        <authorList>
            <person name="Yamamoto Y."/>
            <person name="Aiba H."/>
            <person name="Baba T."/>
            <person name="Hayashi K."/>
            <person name="Inada T."/>
            <person name="Isono K."/>
            <person name="Itoh T."/>
            <person name="Kimura S."/>
            <person name="Kitagawa M."/>
            <person name="Makino K."/>
            <person name="Miki T."/>
            <person name="Mitsuhashi N."/>
            <person name="Mizobuchi K."/>
            <person name="Mori H."/>
            <person name="Nakade S."/>
            <person name="Nakamura Y."/>
            <person name="Nashimoto H."/>
            <person name="Oshima T."/>
            <person name="Oyama S."/>
            <person name="Saito N."/>
            <person name="Sampei G."/>
            <person name="Satoh Y."/>
            <person name="Sivasundaram S."/>
            <person name="Tagami H."/>
            <person name="Takahashi H."/>
            <person name="Takeda J."/>
            <person name="Takemoto K."/>
            <person name="Uehara K."/>
            <person name="Wada C."/>
            <person name="Yamagata S."/>
            <person name="Horiuchi T."/>
        </authorList>
    </citation>
    <scope>NUCLEOTIDE SEQUENCE [LARGE SCALE GENOMIC DNA]</scope>
    <source>
        <strain>K12 / W3110 / ATCC 27325 / DSM 5911</strain>
    </source>
</reference>
<reference key="2">
    <citation type="journal article" date="1997" name="Science">
        <title>The complete genome sequence of Escherichia coli K-12.</title>
        <authorList>
            <person name="Blattner F.R."/>
            <person name="Plunkett G. III"/>
            <person name="Bloch C.A."/>
            <person name="Perna N.T."/>
            <person name="Burland V."/>
            <person name="Riley M."/>
            <person name="Collado-Vides J."/>
            <person name="Glasner J.D."/>
            <person name="Rode C.K."/>
            <person name="Mayhew G.F."/>
            <person name="Gregor J."/>
            <person name="Davis N.W."/>
            <person name="Kirkpatrick H.A."/>
            <person name="Goeden M.A."/>
            <person name="Rose D.J."/>
            <person name="Mau B."/>
            <person name="Shao Y."/>
        </authorList>
    </citation>
    <scope>NUCLEOTIDE SEQUENCE [LARGE SCALE GENOMIC DNA]</scope>
    <source>
        <strain>K12 / MG1655 / ATCC 47076</strain>
    </source>
</reference>
<reference key="3">
    <citation type="journal article" date="2006" name="Mol. Syst. Biol.">
        <title>Highly accurate genome sequences of Escherichia coli K-12 strains MG1655 and W3110.</title>
        <authorList>
            <person name="Hayashi K."/>
            <person name="Morooka N."/>
            <person name="Yamamoto Y."/>
            <person name="Fujita K."/>
            <person name="Isono K."/>
            <person name="Choi S."/>
            <person name="Ohtsubo E."/>
            <person name="Baba T."/>
            <person name="Wanner B.L."/>
            <person name="Mori H."/>
            <person name="Horiuchi T."/>
        </authorList>
    </citation>
    <scope>NUCLEOTIDE SEQUENCE [LARGE SCALE GENOMIC DNA]</scope>
    <source>
        <strain>K12 / W3110 / ATCC 27325 / DSM 5911</strain>
    </source>
</reference>
<reference key="4">
    <citation type="journal article" date="2005" name="Science">
        <title>Global topology analysis of the Escherichia coli inner membrane proteome.</title>
        <authorList>
            <person name="Daley D.O."/>
            <person name="Rapp M."/>
            <person name="Granseth E."/>
            <person name="Melen K."/>
            <person name="Drew D."/>
            <person name="von Heijne G."/>
        </authorList>
    </citation>
    <scope>TOPOLOGY [LARGE SCALE ANALYSIS]</scope>
    <source>
        <strain>K12 / MG1655 / ATCC 47076</strain>
    </source>
</reference>
<protein>
    <recommendedName>
        <fullName>UPF0208 membrane protein YfbV</fullName>
    </recommendedName>
</protein>
<feature type="chain" id="PRO_0000080809" description="UPF0208 membrane protein YfbV">
    <location>
        <begin position="1"/>
        <end position="151"/>
    </location>
</feature>
<feature type="topological domain" description="Cytoplasmic" evidence="1">
    <location>
        <begin position="1"/>
        <end position="45"/>
    </location>
</feature>
<feature type="transmembrane region" description="Helical" evidence="1">
    <location>
        <begin position="46"/>
        <end position="65"/>
    </location>
</feature>
<feature type="topological domain" description="Periplasmic" evidence="1">
    <location>
        <begin position="66"/>
        <end position="68"/>
    </location>
</feature>
<feature type="transmembrane region" description="Helical" evidence="1">
    <location>
        <begin position="69"/>
        <end position="91"/>
    </location>
</feature>
<feature type="topological domain" description="Cytoplasmic" evidence="1">
    <location>
        <begin position="92"/>
        <end position="151"/>
    </location>
</feature>
<name>YFBV_ECOLI</name>
<evidence type="ECO:0000255" key="1"/>
<evidence type="ECO:0000305" key="2"/>
<gene>
    <name type="primary">yfbV</name>
    <name type="ordered locus">b2295</name>
    <name type="ordered locus">JW2292</name>
</gene>
<organism>
    <name type="scientific">Escherichia coli (strain K12)</name>
    <dbReference type="NCBI Taxonomy" id="83333"/>
    <lineage>
        <taxon>Bacteria</taxon>
        <taxon>Pseudomonadati</taxon>
        <taxon>Pseudomonadota</taxon>
        <taxon>Gammaproteobacteria</taxon>
        <taxon>Enterobacterales</taxon>
        <taxon>Enterobacteriaceae</taxon>
        <taxon>Escherichia</taxon>
    </lineage>
</organism>
<comment type="subcellular location">
    <subcellularLocation>
        <location>Cell inner membrane</location>
        <topology>Multi-pass membrane protein</topology>
    </subcellularLocation>
</comment>
<comment type="similarity">
    <text evidence="2">Belongs to the UPF0208 family.</text>
</comment>
<dbReference type="EMBL" id="U00096">
    <property type="protein sequence ID" value="AAC75355.1"/>
    <property type="molecule type" value="Genomic_DNA"/>
</dbReference>
<dbReference type="EMBL" id="AP009048">
    <property type="protein sequence ID" value="BAA16130.1"/>
    <property type="molecule type" value="Genomic_DNA"/>
</dbReference>
<dbReference type="PIR" id="E65001">
    <property type="entry name" value="E65001"/>
</dbReference>
<dbReference type="RefSeq" id="NP_416798.1">
    <property type="nucleotide sequence ID" value="NC_000913.3"/>
</dbReference>
<dbReference type="RefSeq" id="WP_000106627.1">
    <property type="nucleotide sequence ID" value="NZ_STEB01000008.1"/>
</dbReference>
<dbReference type="BioGRID" id="4262965">
    <property type="interactions" value="423"/>
</dbReference>
<dbReference type="FunCoup" id="P0A8D9">
    <property type="interactions" value="87"/>
</dbReference>
<dbReference type="IntAct" id="P0A8D9">
    <property type="interactions" value="1"/>
</dbReference>
<dbReference type="STRING" id="511145.b2295"/>
<dbReference type="PaxDb" id="511145-b2295"/>
<dbReference type="EnsemblBacteria" id="AAC75355">
    <property type="protein sequence ID" value="AAC75355"/>
    <property type="gene ID" value="b2295"/>
</dbReference>
<dbReference type="GeneID" id="93774879"/>
<dbReference type="GeneID" id="946774"/>
<dbReference type="KEGG" id="ecj:JW2292"/>
<dbReference type="KEGG" id="eco:b2295"/>
<dbReference type="KEGG" id="ecoc:C3026_12800"/>
<dbReference type="PATRIC" id="fig|1411691.4.peg.4440"/>
<dbReference type="EchoBASE" id="EB3859"/>
<dbReference type="eggNOG" id="COG3092">
    <property type="taxonomic scope" value="Bacteria"/>
</dbReference>
<dbReference type="HOGENOM" id="CLU_128746_0_0_6"/>
<dbReference type="InParanoid" id="P0A8D9"/>
<dbReference type="OMA" id="IMPPVAV"/>
<dbReference type="OrthoDB" id="7066670at2"/>
<dbReference type="PhylomeDB" id="P0A8D9"/>
<dbReference type="BioCyc" id="EcoCyc:G7189-MONOMER"/>
<dbReference type="PRO" id="PR:P0A8D9"/>
<dbReference type="Proteomes" id="UP000000625">
    <property type="component" value="Chromosome"/>
</dbReference>
<dbReference type="GO" id="GO:0005886">
    <property type="term" value="C:plasma membrane"/>
    <property type="evidence" value="ECO:0000314"/>
    <property type="project" value="EcoCyc"/>
</dbReference>
<dbReference type="GO" id="GO:2001251">
    <property type="term" value="P:negative regulation of chromosome organization"/>
    <property type="evidence" value="ECO:0000315"/>
    <property type="project" value="EcoCyc"/>
</dbReference>
<dbReference type="HAMAP" id="MF_01101">
    <property type="entry name" value="UPF0208"/>
    <property type="match status" value="1"/>
</dbReference>
<dbReference type="InterPro" id="IPR007334">
    <property type="entry name" value="UPF0208"/>
</dbReference>
<dbReference type="NCBIfam" id="NF002493">
    <property type="entry name" value="PRK01816.1"/>
    <property type="match status" value="1"/>
</dbReference>
<dbReference type="Pfam" id="PF04217">
    <property type="entry name" value="DUF412"/>
    <property type="match status" value="1"/>
</dbReference>
<accession>P0A8D9</accession>
<accession>P77496</accession>
<accession>Q8X2P6</accession>
<accession>Q8X4G9</accession>
<keyword id="KW-0997">Cell inner membrane</keyword>
<keyword id="KW-1003">Cell membrane</keyword>
<keyword id="KW-0472">Membrane</keyword>
<keyword id="KW-1185">Reference proteome</keyword>
<keyword id="KW-0812">Transmembrane</keyword>
<keyword id="KW-1133">Transmembrane helix</keyword>
<proteinExistence type="evidence at protein level"/>